<evidence type="ECO:0000255" key="1">
    <source>
        <dbReference type="HAMAP-Rule" id="MF_00737"/>
    </source>
</evidence>
<evidence type="ECO:0000305" key="2"/>
<sequence>MLEDYYPSTTSYYHGGIDDDLYTAKWGMVMTFLDLNDSSLTPFEGTHFALIGFKSDKGVYINNGRVGAVESPAAIRTQLAKFPWHLGNQVMVYDVGNIDGPNRSLEQLQNSLSKAIKRMCDLNLKPIVLGGGHETAYGHYLGLRQSLSPSDDLAVINMDAHFDLRPYDQTGPNSGTGFRQMFDDAVADKRLFKYFVLGIQEHNNNLFLFDFVAKSKGIQFLTGQDIYQMGHQKVCRAIDRFLEGQERVYLTIDMDCFSVGAAPGVSAIQSLGVDPNLAVLVLQHIAASGKLVGFDVVEVSPPHDIDNHTANLAATFIFYLVQIMAQHN</sequence>
<protein>
    <recommendedName>
        <fullName evidence="1">Formimidoylglutamase</fullName>
        <ecNumber evidence="1">3.5.3.8</ecNumber>
    </recommendedName>
    <alternativeName>
        <fullName evidence="1">Formiminoglutamase</fullName>
    </alternativeName>
    <alternativeName>
        <fullName evidence="1">Formiminoglutamate hydrolase</fullName>
    </alternativeName>
</protein>
<keyword id="KW-0369">Histidine metabolism</keyword>
<keyword id="KW-0378">Hydrolase</keyword>
<keyword id="KW-0464">Manganese</keyword>
<keyword id="KW-0479">Metal-binding</keyword>
<proteinExistence type="inferred from homology"/>
<gene>
    <name evidence="1" type="primary">hutG</name>
    <name type="ordered locus">M28_Spy1762</name>
</gene>
<name>HUTG_STRPM</name>
<accession>Q48QY8</accession>
<organism>
    <name type="scientific">Streptococcus pyogenes serotype M28 (strain MGAS6180)</name>
    <dbReference type="NCBI Taxonomy" id="319701"/>
    <lineage>
        <taxon>Bacteria</taxon>
        <taxon>Bacillati</taxon>
        <taxon>Bacillota</taxon>
        <taxon>Bacilli</taxon>
        <taxon>Lactobacillales</taxon>
        <taxon>Streptococcaceae</taxon>
        <taxon>Streptococcus</taxon>
    </lineage>
</organism>
<comment type="function">
    <text evidence="1">Catalyzes the conversion of N-formimidoyl-L-glutamate to L-glutamate and formamide.</text>
</comment>
<comment type="catalytic activity">
    <reaction evidence="1">
        <text>N-formimidoyl-L-glutamate + H2O = formamide + L-glutamate</text>
        <dbReference type="Rhea" id="RHEA:22492"/>
        <dbReference type="ChEBI" id="CHEBI:15377"/>
        <dbReference type="ChEBI" id="CHEBI:16397"/>
        <dbReference type="ChEBI" id="CHEBI:29985"/>
        <dbReference type="ChEBI" id="CHEBI:58928"/>
        <dbReference type="EC" id="3.5.3.8"/>
    </reaction>
</comment>
<comment type="cofactor">
    <cofactor evidence="1">
        <name>Mn(2+)</name>
        <dbReference type="ChEBI" id="CHEBI:29035"/>
    </cofactor>
    <text evidence="1">Binds 2 manganese ions per subunit.</text>
</comment>
<comment type="pathway">
    <text evidence="1">Amino-acid degradation; L-histidine degradation into L-glutamate; L-glutamate from N-formimidoyl-L-glutamate (hydrolase route): step 1/1.</text>
</comment>
<comment type="similarity">
    <text evidence="1">Belongs to the arginase family.</text>
</comment>
<comment type="sequence caution" evidence="2">
    <conflict type="erroneous initiation">
        <sequence resource="EMBL-CDS" id="AAX72872"/>
    </conflict>
</comment>
<feature type="chain" id="PRO_0000258267" description="Formimidoylglutamase">
    <location>
        <begin position="1"/>
        <end position="328"/>
    </location>
</feature>
<feature type="binding site" evidence="1">
    <location>
        <position position="133"/>
    </location>
    <ligand>
        <name>Mn(2+)</name>
        <dbReference type="ChEBI" id="CHEBI:29035"/>
        <label>1</label>
    </ligand>
</feature>
<feature type="binding site" evidence="1">
    <location>
        <position position="159"/>
    </location>
    <ligand>
        <name>Mn(2+)</name>
        <dbReference type="ChEBI" id="CHEBI:29035"/>
        <label>1</label>
    </ligand>
</feature>
<feature type="binding site" evidence="1">
    <location>
        <position position="159"/>
    </location>
    <ligand>
        <name>Mn(2+)</name>
        <dbReference type="ChEBI" id="CHEBI:29035"/>
        <label>2</label>
    </ligand>
</feature>
<feature type="binding site" evidence="1">
    <location>
        <position position="161"/>
    </location>
    <ligand>
        <name>Mn(2+)</name>
        <dbReference type="ChEBI" id="CHEBI:29035"/>
        <label>2</label>
    </ligand>
</feature>
<feature type="binding site" evidence="1">
    <location>
        <position position="163"/>
    </location>
    <ligand>
        <name>Mn(2+)</name>
        <dbReference type="ChEBI" id="CHEBI:29035"/>
        <label>1</label>
    </ligand>
</feature>
<feature type="binding site" evidence="1">
    <location>
        <position position="253"/>
    </location>
    <ligand>
        <name>Mn(2+)</name>
        <dbReference type="ChEBI" id="CHEBI:29035"/>
        <label>1</label>
    </ligand>
</feature>
<feature type="binding site" evidence="1">
    <location>
        <position position="253"/>
    </location>
    <ligand>
        <name>Mn(2+)</name>
        <dbReference type="ChEBI" id="CHEBI:29035"/>
        <label>2</label>
    </ligand>
</feature>
<feature type="binding site" evidence="1">
    <location>
        <position position="255"/>
    </location>
    <ligand>
        <name>Mn(2+)</name>
        <dbReference type="ChEBI" id="CHEBI:29035"/>
        <label>2</label>
    </ligand>
</feature>
<reference key="1">
    <citation type="journal article" date="2005" name="J. Infect. Dis.">
        <title>Genome sequence of a serotype M28 strain of group A Streptococcus: potential new insights into puerperal sepsis and bacterial disease specificity.</title>
        <authorList>
            <person name="Green N.M."/>
            <person name="Zhang S."/>
            <person name="Porcella S.F."/>
            <person name="Nagiec M.J."/>
            <person name="Barbian K.D."/>
            <person name="Beres S.B."/>
            <person name="Lefebvre R.B."/>
            <person name="Musser J.M."/>
        </authorList>
    </citation>
    <scope>NUCLEOTIDE SEQUENCE [LARGE SCALE GENOMIC DNA]</scope>
    <source>
        <strain>MGAS6180</strain>
    </source>
</reference>
<dbReference type="EC" id="3.5.3.8" evidence="1"/>
<dbReference type="EMBL" id="CP000056">
    <property type="protein sequence ID" value="AAX72872.1"/>
    <property type="status" value="ALT_INIT"/>
    <property type="molecule type" value="Genomic_DNA"/>
</dbReference>
<dbReference type="RefSeq" id="WP_021340705.1">
    <property type="nucleotide sequence ID" value="NC_007296.2"/>
</dbReference>
<dbReference type="SMR" id="Q48QY8"/>
<dbReference type="KEGG" id="spb:M28_Spy1762"/>
<dbReference type="HOGENOM" id="CLU_039478_2_0_9"/>
<dbReference type="UniPathway" id="UPA00379">
    <property type="reaction ID" value="UER00552"/>
</dbReference>
<dbReference type="GO" id="GO:0008783">
    <property type="term" value="F:agmatinase activity"/>
    <property type="evidence" value="ECO:0007669"/>
    <property type="project" value="TreeGrafter"/>
</dbReference>
<dbReference type="GO" id="GO:0050415">
    <property type="term" value="F:formimidoylglutamase activity"/>
    <property type="evidence" value="ECO:0007669"/>
    <property type="project" value="UniProtKB-UniRule"/>
</dbReference>
<dbReference type="GO" id="GO:0030145">
    <property type="term" value="F:manganese ion binding"/>
    <property type="evidence" value="ECO:0007669"/>
    <property type="project" value="UniProtKB-UniRule"/>
</dbReference>
<dbReference type="GO" id="GO:0019556">
    <property type="term" value="P:L-histidine catabolic process to glutamate and formamide"/>
    <property type="evidence" value="ECO:0007669"/>
    <property type="project" value="UniProtKB-UniPathway"/>
</dbReference>
<dbReference type="GO" id="GO:0019557">
    <property type="term" value="P:L-histidine catabolic process to glutamate and formate"/>
    <property type="evidence" value="ECO:0007669"/>
    <property type="project" value="UniProtKB-UniPathway"/>
</dbReference>
<dbReference type="GO" id="GO:0033389">
    <property type="term" value="P:putrescine biosynthetic process from arginine, via agmatine"/>
    <property type="evidence" value="ECO:0007669"/>
    <property type="project" value="TreeGrafter"/>
</dbReference>
<dbReference type="CDD" id="cd09988">
    <property type="entry name" value="Formimidoylglutamase"/>
    <property type="match status" value="1"/>
</dbReference>
<dbReference type="Gene3D" id="3.40.800.10">
    <property type="entry name" value="Ureohydrolase domain"/>
    <property type="match status" value="1"/>
</dbReference>
<dbReference type="HAMAP" id="MF_00737">
    <property type="entry name" value="Formimidoylglutam"/>
    <property type="match status" value="1"/>
</dbReference>
<dbReference type="InterPro" id="IPR005923">
    <property type="entry name" value="HutG"/>
</dbReference>
<dbReference type="InterPro" id="IPR006035">
    <property type="entry name" value="Ureohydrolase"/>
</dbReference>
<dbReference type="InterPro" id="IPR023696">
    <property type="entry name" value="Ureohydrolase_dom_sf"/>
</dbReference>
<dbReference type="NCBIfam" id="NF010347">
    <property type="entry name" value="PRK13775.1"/>
    <property type="match status" value="1"/>
</dbReference>
<dbReference type="PANTHER" id="PTHR11358">
    <property type="entry name" value="ARGINASE/AGMATINASE"/>
    <property type="match status" value="1"/>
</dbReference>
<dbReference type="PANTHER" id="PTHR11358:SF35">
    <property type="entry name" value="FORMIMIDOYLGLUTAMASE"/>
    <property type="match status" value="1"/>
</dbReference>
<dbReference type="Pfam" id="PF00491">
    <property type="entry name" value="Arginase"/>
    <property type="match status" value="1"/>
</dbReference>
<dbReference type="PIRSF" id="PIRSF036979">
    <property type="entry name" value="Arginase"/>
    <property type="match status" value="1"/>
</dbReference>
<dbReference type="PRINTS" id="PR00116">
    <property type="entry name" value="ARGINASE"/>
</dbReference>
<dbReference type="SUPFAM" id="SSF52768">
    <property type="entry name" value="Arginase/deacetylase"/>
    <property type="match status" value="1"/>
</dbReference>
<dbReference type="PROSITE" id="PS51409">
    <property type="entry name" value="ARGINASE_2"/>
    <property type="match status" value="1"/>
</dbReference>